<keyword id="KW-0067">ATP-binding</keyword>
<keyword id="KW-0963">Cytoplasm</keyword>
<keyword id="KW-0418">Kinase</keyword>
<keyword id="KW-0460">Magnesium</keyword>
<keyword id="KW-0479">Metal-binding</keyword>
<keyword id="KW-0546">Nucleotide metabolism</keyword>
<keyword id="KW-0547">Nucleotide-binding</keyword>
<keyword id="KW-0597">Phosphoprotein</keyword>
<keyword id="KW-1185">Reference proteome</keyword>
<keyword id="KW-0808">Transferase</keyword>
<name>NDK_ACAM1</name>
<gene>
    <name evidence="1" type="primary">ndk</name>
    <name type="ordered locus">AM1_3733</name>
</gene>
<sequence length="149" mass="16379">MERTFLAVKPDGVQRGLVGEIISRYEAKGFTLVGLKLMVVSRELAEQHYGEHKEKPFFSGLVDFITSGPVVAMVWEGKGVVAAARKIIGATNPLGSEPGTIRGDFGIDIGRNIIHGSDAVETAQREISLWFKSEELADWSPTLTSWIYE</sequence>
<feature type="chain" id="PRO_1000080952" description="Nucleoside diphosphate kinase">
    <location>
        <begin position="1"/>
        <end position="149"/>
    </location>
</feature>
<feature type="active site" description="Pros-phosphohistidine intermediate" evidence="1">
    <location>
        <position position="115"/>
    </location>
</feature>
<feature type="binding site" evidence="1">
    <location>
        <position position="9"/>
    </location>
    <ligand>
        <name>ATP</name>
        <dbReference type="ChEBI" id="CHEBI:30616"/>
    </ligand>
</feature>
<feature type="binding site" evidence="1">
    <location>
        <position position="57"/>
    </location>
    <ligand>
        <name>ATP</name>
        <dbReference type="ChEBI" id="CHEBI:30616"/>
    </ligand>
</feature>
<feature type="binding site" evidence="1">
    <location>
        <position position="85"/>
    </location>
    <ligand>
        <name>ATP</name>
        <dbReference type="ChEBI" id="CHEBI:30616"/>
    </ligand>
</feature>
<feature type="binding site" evidence="1">
    <location>
        <position position="91"/>
    </location>
    <ligand>
        <name>ATP</name>
        <dbReference type="ChEBI" id="CHEBI:30616"/>
    </ligand>
</feature>
<feature type="binding site" evidence="1">
    <location>
        <position position="102"/>
    </location>
    <ligand>
        <name>ATP</name>
        <dbReference type="ChEBI" id="CHEBI:30616"/>
    </ligand>
</feature>
<feature type="binding site" evidence="1">
    <location>
        <position position="112"/>
    </location>
    <ligand>
        <name>ATP</name>
        <dbReference type="ChEBI" id="CHEBI:30616"/>
    </ligand>
</feature>
<evidence type="ECO:0000255" key="1">
    <source>
        <dbReference type="HAMAP-Rule" id="MF_00451"/>
    </source>
</evidence>
<accession>B0C4I0</accession>
<organism>
    <name type="scientific">Acaryochloris marina (strain MBIC 11017)</name>
    <dbReference type="NCBI Taxonomy" id="329726"/>
    <lineage>
        <taxon>Bacteria</taxon>
        <taxon>Bacillati</taxon>
        <taxon>Cyanobacteriota</taxon>
        <taxon>Cyanophyceae</taxon>
        <taxon>Acaryochloridales</taxon>
        <taxon>Acaryochloridaceae</taxon>
        <taxon>Acaryochloris</taxon>
    </lineage>
</organism>
<dbReference type="EC" id="2.7.4.6" evidence="1"/>
<dbReference type="EMBL" id="CP000828">
    <property type="protein sequence ID" value="ABW28723.1"/>
    <property type="molecule type" value="Genomic_DNA"/>
</dbReference>
<dbReference type="RefSeq" id="WP_012164102.1">
    <property type="nucleotide sequence ID" value="NC_009925.1"/>
</dbReference>
<dbReference type="SMR" id="B0C4I0"/>
<dbReference type="STRING" id="329726.AM1_3733"/>
<dbReference type="KEGG" id="amr:AM1_3733"/>
<dbReference type="eggNOG" id="COG0105">
    <property type="taxonomic scope" value="Bacteria"/>
</dbReference>
<dbReference type="HOGENOM" id="CLU_060216_6_3_3"/>
<dbReference type="OrthoDB" id="9801161at2"/>
<dbReference type="Proteomes" id="UP000000268">
    <property type="component" value="Chromosome"/>
</dbReference>
<dbReference type="GO" id="GO:0005737">
    <property type="term" value="C:cytoplasm"/>
    <property type="evidence" value="ECO:0007669"/>
    <property type="project" value="UniProtKB-SubCell"/>
</dbReference>
<dbReference type="GO" id="GO:0005524">
    <property type="term" value="F:ATP binding"/>
    <property type="evidence" value="ECO:0007669"/>
    <property type="project" value="UniProtKB-UniRule"/>
</dbReference>
<dbReference type="GO" id="GO:0046872">
    <property type="term" value="F:metal ion binding"/>
    <property type="evidence" value="ECO:0007669"/>
    <property type="project" value="UniProtKB-KW"/>
</dbReference>
<dbReference type="GO" id="GO:0004550">
    <property type="term" value="F:nucleoside diphosphate kinase activity"/>
    <property type="evidence" value="ECO:0007669"/>
    <property type="project" value="UniProtKB-UniRule"/>
</dbReference>
<dbReference type="GO" id="GO:0006241">
    <property type="term" value="P:CTP biosynthetic process"/>
    <property type="evidence" value="ECO:0007669"/>
    <property type="project" value="UniProtKB-UniRule"/>
</dbReference>
<dbReference type="GO" id="GO:0006183">
    <property type="term" value="P:GTP biosynthetic process"/>
    <property type="evidence" value="ECO:0007669"/>
    <property type="project" value="UniProtKB-UniRule"/>
</dbReference>
<dbReference type="GO" id="GO:0006228">
    <property type="term" value="P:UTP biosynthetic process"/>
    <property type="evidence" value="ECO:0007669"/>
    <property type="project" value="UniProtKB-UniRule"/>
</dbReference>
<dbReference type="CDD" id="cd04413">
    <property type="entry name" value="NDPk_I"/>
    <property type="match status" value="1"/>
</dbReference>
<dbReference type="FunFam" id="3.30.70.141:FF:000002">
    <property type="entry name" value="Nucleoside diphosphate kinase"/>
    <property type="match status" value="1"/>
</dbReference>
<dbReference type="Gene3D" id="3.30.70.141">
    <property type="entry name" value="Nucleoside diphosphate kinase-like domain"/>
    <property type="match status" value="1"/>
</dbReference>
<dbReference type="HAMAP" id="MF_00451">
    <property type="entry name" value="NDP_kinase"/>
    <property type="match status" value="1"/>
</dbReference>
<dbReference type="InterPro" id="IPR034907">
    <property type="entry name" value="NDK-like_dom"/>
</dbReference>
<dbReference type="InterPro" id="IPR036850">
    <property type="entry name" value="NDK-like_dom_sf"/>
</dbReference>
<dbReference type="InterPro" id="IPR001564">
    <property type="entry name" value="Nucleoside_diP_kinase"/>
</dbReference>
<dbReference type="InterPro" id="IPR023005">
    <property type="entry name" value="Nucleoside_diP_kinase_AS"/>
</dbReference>
<dbReference type="NCBIfam" id="NF001908">
    <property type="entry name" value="PRK00668.1"/>
    <property type="match status" value="1"/>
</dbReference>
<dbReference type="PANTHER" id="PTHR11349">
    <property type="entry name" value="NUCLEOSIDE DIPHOSPHATE KINASE"/>
    <property type="match status" value="1"/>
</dbReference>
<dbReference type="Pfam" id="PF00334">
    <property type="entry name" value="NDK"/>
    <property type="match status" value="1"/>
</dbReference>
<dbReference type="PRINTS" id="PR01243">
    <property type="entry name" value="NUCDPKINASE"/>
</dbReference>
<dbReference type="SMART" id="SM00562">
    <property type="entry name" value="NDK"/>
    <property type="match status" value="1"/>
</dbReference>
<dbReference type="SUPFAM" id="SSF54919">
    <property type="entry name" value="Nucleoside diphosphate kinase, NDK"/>
    <property type="match status" value="1"/>
</dbReference>
<dbReference type="PROSITE" id="PS00469">
    <property type="entry name" value="NDPK"/>
    <property type="match status" value="1"/>
</dbReference>
<dbReference type="PROSITE" id="PS51374">
    <property type="entry name" value="NDPK_LIKE"/>
    <property type="match status" value="1"/>
</dbReference>
<comment type="function">
    <text evidence="1">Major role in the synthesis of nucleoside triphosphates other than ATP. The ATP gamma phosphate is transferred to the NDP beta phosphate via a ping-pong mechanism, using a phosphorylated active-site intermediate.</text>
</comment>
<comment type="catalytic activity">
    <reaction evidence="1">
        <text>a 2'-deoxyribonucleoside 5'-diphosphate + ATP = a 2'-deoxyribonucleoside 5'-triphosphate + ADP</text>
        <dbReference type="Rhea" id="RHEA:44640"/>
        <dbReference type="ChEBI" id="CHEBI:30616"/>
        <dbReference type="ChEBI" id="CHEBI:61560"/>
        <dbReference type="ChEBI" id="CHEBI:73316"/>
        <dbReference type="ChEBI" id="CHEBI:456216"/>
        <dbReference type="EC" id="2.7.4.6"/>
    </reaction>
</comment>
<comment type="catalytic activity">
    <reaction evidence="1">
        <text>a ribonucleoside 5'-diphosphate + ATP = a ribonucleoside 5'-triphosphate + ADP</text>
        <dbReference type="Rhea" id="RHEA:18113"/>
        <dbReference type="ChEBI" id="CHEBI:30616"/>
        <dbReference type="ChEBI" id="CHEBI:57930"/>
        <dbReference type="ChEBI" id="CHEBI:61557"/>
        <dbReference type="ChEBI" id="CHEBI:456216"/>
        <dbReference type="EC" id="2.7.4.6"/>
    </reaction>
</comment>
<comment type="cofactor">
    <cofactor evidence="1">
        <name>Mg(2+)</name>
        <dbReference type="ChEBI" id="CHEBI:18420"/>
    </cofactor>
</comment>
<comment type="subunit">
    <text evidence="1">Homotetramer.</text>
</comment>
<comment type="subcellular location">
    <subcellularLocation>
        <location evidence="1">Cytoplasm</location>
    </subcellularLocation>
</comment>
<comment type="similarity">
    <text evidence="1">Belongs to the NDK family.</text>
</comment>
<reference key="1">
    <citation type="journal article" date="2008" name="Proc. Natl. Acad. Sci. U.S.A.">
        <title>Niche adaptation and genome expansion in the chlorophyll d-producing cyanobacterium Acaryochloris marina.</title>
        <authorList>
            <person name="Swingley W.D."/>
            <person name="Chen M."/>
            <person name="Cheung P.C."/>
            <person name="Conrad A.L."/>
            <person name="Dejesa L.C."/>
            <person name="Hao J."/>
            <person name="Honchak B.M."/>
            <person name="Karbach L.E."/>
            <person name="Kurdoglu A."/>
            <person name="Lahiri S."/>
            <person name="Mastrian S.D."/>
            <person name="Miyashita H."/>
            <person name="Page L."/>
            <person name="Ramakrishna P."/>
            <person name="Satoh S."/>
            <person name="Sattley W.M."/>
            <person name="Shimada Y."/>
            <person name="Taylor H.L."/>
            <person name="Tomo T."/>
            <person name="Tsuchiya T."/>
            <person name="Wang Z.T."/>
            <person name="Raymond J."/>
            <person name="Mimuro M."/>
            <person name="Blankenship R.E."/>
            <person name="Touchman J.W."/>
        </authorList>
    </citation>
    <scope>NUCLEOTIDE SEQUENCE [LARGE SCALE GENOMIC DNA]</scope>
    <source>
        <strain>MBIC 11017</strain>
    </source>
</reference>
<protein>
    <recommendedName>
        <fullName evidence="1">Nucleoside diphosphate kinase</fullName>
        <shortName evidence="1">NDK</shortName>
        <shortName evidence="1">NDP kinase</shortName>
        <ecNumber evidence="1">2.7.4.6</ecNumber>
    </recommendedName>
    <alternativeName>
        <fullName evidence="1">Nucleoside-2-P kinase</fullName>
    </alternativeName>
</protein>
<proteinExistence type="inferred from homology"/>